<organism>
    <name type="scientific">Bos taurus</name>
    <name type="common">Bovine</name>
    <dbReference type="NCBI Taxonomy" id="9913"/>
    <lineage>
        <taxon>Eukaryota</taxon>
        <taxon>Metazoa</taxon>
        <taxon>Chordata</taxon>
        <taxon>Craniata</taxon>
        <taxon>Vertebrata</taxon>
        <taxon>Euteleostomi</taxon>
        <taxon>Mammalia</taxon>
        <taxon>Eutheria</taxon>
        <taxon>Laurasiatheria</taxon>
        <taxon>Artiodactyla</taxon>
        <taxon>Ruminantia</taxon>
        <taxon>Pecora</taxon>
        <taxon>Bovidae</taxon>
        <taxon>Bovinae</taxon>
        <taxon>Bos</taxon>
    </lineage>
</organism>
<reference key="1">
    <citation type="submission" date="2007-06" db="EMBL/GenBank/DDBJ databases">
        <authorList>
            <consortium name="NIH - Mammalian Gene Collection (MGC) project"/>
        </authorList>
    </citation>
    <scope>NUCLEOTIDE SEQUENCE [LARGE SCALE MRNA]</scope>
    <source>
        <strain>Hereford</strain>
        <tissue>Thymus</tissue>
    </source>
</reference>
<reference key="2">
    <citation type="journal article" date="2007" name="Genome Res.">
        <title>Functional persistence of exonized mammalian-wide interspersed repeat elements (MIRs).</title>
        <authorList>
            <person name="Krull M."/>
            <person name="Petrusma M."/>
            <person name="Makalowski W."/>
            <person name="Brosius J."/>
            <person name="Schmitz J."/>
        </authorList>
    </citation>
    <scope>NUCLEOTIDE SEQUENCE [MRNA] OF 50-190</scope>
</reference>
<accession>A5PK30</accession>
<accession>A9X402</accession>
<sequence length="485" mass="56105">MNEYPKKRKRKTLHPSRYSDSSGISRIADGFNGIFSDHCYSVCSMRQPDLKYFDNKDDDSDTETSNELPKFTDGIKARNRNQNYLVPSPVLRILDHTAFPTEKSADIEICDEDCDSPESVHQQTQEESPIEVHTAEDVPIAAEVHAISEDYDIETENNSSESLQDQTDEEPPAKLCKIVDKSQALNVTAQQKWPLLRANSSGLYKCELCEFNSKYFSDLKQHMILKHKRTDSNVCRVCKESFSTNMLLIEHAKLHEEDPYICKYCDYKTVIFENLSQHIADTHFSDHLYWCEQCDVQFSSSSELYLHFQEHSCDEQYLCQFCEHETNDPEDLHSHVVNEHACKLIELSDKYNNGEHGQYSLLSKITFDKCKNFFVCQVCGFRSRLHTNVNRHVAIEHTKIFPHVCDDCGKGFSSMLEYCKHLNSHLSEGIYLCQYCEYSTGQIEDLKIHLDFKHSADLPHKCSDCLMRFGNERELISHLPVHETT</sequence>
<keyword id="KW-0238">DNA-binding</keyword>
<keyword id="KW-1017">Isopeptide bond</keyword>
<keyword id="KW-0479">Metal-binding</keyword>
<keyword id="KW-0539">Nucleus</keyword>
<keyword id="KW-0597">Phosphoprotein</keyword>
<keyword id="KW-1185">Reference proteome</keyword>
<keyword id="KW-0677">Repeat</keyword>
<keyword id="KW-0678">Repressor</keyword>
<keyword id="KW-0804">Transcription</keyword>
<keyword id="KW-0805">Transcription regulation</keyword>
<keyword id="KW-0832">Ubl conjugation</keyword>
<keyword id="KW-0862">Zinc</keyword>
<keyword id="KW-0863">Zinc-finger</keyword>
<comment type="function">
    <text evidence="1">Binds DNA and may function as a transcriptional repressor.</text>
</comment>
<comment type="subunit">
    <text evidence="1">Interacts with CTNNA2.</text>
</comment>
<comment type="subcellular location">
    <subcellularLocation>
        <location evidence="1">Nucleus</location>
    </subcellularLocation>
</comment>
<comment type="similarity">
    <text evidence="5">Belongs to the krueppel C2H2-type zinc-finger protein family.</text>
</comment>
<proteinExistence type="evidence at transcript level"/>
<evidence type="ECO:0000250" key="1"/>
<evidence type="ECO:0000250" key="2">
    <source>
        <dbReference type="UniProtKB" id="Q9UID6"/>
    </source>
</evidence>
<evidence type="ECO:0000255" key="3">
    <source>
        <dbReference type="PROSITE-ProRule" id="PRU00042"/>
    </source>
</evidence>
<evidence type="ECO:0000256" key="4">
    <source>
        <dbReference type="SAM" id="MobiDB-lite"/>
    </source>
</evidence>
<evidence type="ECO:0000305" key="5"/>
<name>ZN639_BOVIN</name>
<protein>
    <recommendedName>
        <fullName>Zinc finger protein 639</fullName>
    </recommendedName>
</protein>
<feature type="chain" id="PRO_0000383572" description="Zinc finger protein 639">
    <location>
        <begin position="1"/>
        <end position="485"/>
    </location>
</feature>
<feature type="zinc finger region" description="C2H2-type 1" evidence="3">
    <location>
        <begin position="204"/>
        <end position="227"/>
    </location>
</feature>
<feature type="zinc finger region" description="C2H2-type 2" evidence="3">
    <location>
        <begin position="233"/>
        <end position="255"/>
    </location>
</feature>
<feature type="zinc finger region" description="C2H2-type 3" evidence="3">
    <location>
        <begin position="260"/>
        <end position="283"/>
    </location>
</feature>
<feature type="zinc finger region" description="C2H2-type 4" evidence="3">
    <location>
        <begin position="289"/>
        <end position="311"/>
    </location>
</feature>
<feature type="zinc finger region" description="C2H2-type 5" evidence="3">
    <location>
        <begin position="374"/>
        <end position="397"/>
    </location>
</feature>
<feature type="zinc finger region" description="C2H2-type 6" evidence="3">
    <location>
        <begin position="403"/>
        <end position="425"/>
    </location>
</feature>
<feature type="zinc finger region" description="C2H2-type 7" evidence="3">
    <location>
        <begin position="431"/>
        <end position="454"/>
    </location>
</feature>
<feature type="zinc finger region" description="C2H2-type 8" evidence="3">
    <location>
        <begin position="460"/>
        <end position="482"/>
    </location>
</feature>
<feature type="region of interest" description="Disordered" evidence="4">
    <location>
        <begin position="1"/>
        <end position="20"/>
    </location>
</feature>
<feature type="region of interest" description="Interaction with CTNNA2" evidence="1">
    <location>
        <begin position="371"/>
        <end position="455"/>
    </location>
</feature>
<feature type="compositionally biased region" description="Basic residues" evidence="4">
    <location>
        <begin position="1"/>
        <end position="14"/>
    </location>
</feature>
<feature type="modified residue" description="Phosphoserine" evidence="2">
    <location>
        <position position="60"/>
    </location>
</feature>
<feature type="modified residue" description="Phosphoserine" evidence="2">
    <location>
        <position position="88"/>
    </location>
</feature>
<feature type="cross-link" description="Glycyl lysine isopeptide (Lys-Gly) (interchain with G-Cter in SUMO2)" evidence="2">
    <location>
        <position position="76"/>
    </location>
</feature>
<feature type="cross-link" description="Glycyl lysine isopeptide (Lys-Gly) (interchain with G-Cter in SUMO2)" evidence="2">
    <location>
        <position position="177"/>
    </location>
</feature>
<feature type="cross-link" description="Glycyl lysine isopeptide (Lys-Gly) (interchain with G-Cter in SUMO2)" evidence="2">
    <location>
        <position position="181"/>
    </location>
</feature>
<feature type="cross-link" description="Glycyl lysine isopeptide (Lys-Gly) (interchain with G-Cter in SUMO2)" evidence="2">
    <location>
        <position position="226"/>
    </location>
</feature>
<dbReference type="EMBL" id="BC142332">
    <property type="protein sequence ID" value="AAI42333.1"/>
    <property type="molecule type" value="mRNA"/>
</dbReference>
<dbReference type="EMBL" id="DQ323616">
    <property type="protein sequence ID" value="ABD27863.1"/>
    <property type="molecule type" value="mRNA"/>
</dbReference>
<dbReference type="RefSeq" id="NP_001092493.1">
    <property type="nucleotide sequence ID" value="NM_001099023.2"/>
</dbReference>
<dbReference type="RefSeq" id="XP_010799645.1">
    <property type="nucleotide sequence ID" value="XM_010801343.2"/>
</dbReference>
<dbReference type="RefSeq" id="XP_010799646.1">
    <property type="nucleotide sequence ID" value="XM_010801344.2"/>
</dbReference>
<dbReference type="RefSeq" id="XP_024845396.1">
    <property type="nucleotide sequence ID" value="XM_024989628.2"/>
</dbReference>
<dbReference type="RefSeq" id="XP_024845398.1">
    <property type="nucleotide sequence ID" value="XM_024989630.2"/>
</dbReference>
<dbReference type="RefSeq" id="XP_024845400.1">
    <property type="nucleotide sequence ID" value="XM_024989632.2"/>
</dbReference>
<dbReference type="RefSeq" id="XP_024845402.1">
    <property type="nucleotide sequence ID" value="XM_024989634.2"/>
</dbReference>
<dbReference type="RefSeq" id="XP_059740727.1">
    <property type="nucleotide sequence ID" value="XM_059884744.1"/>
</dbReference>
<dbReference type="SMR" id="A5PK30"/>
<dbReference type="FunCoup" id="A5PK30">
    <property type="interactions" value="3357"/>
</dbReference>
<dbReference type="STRING" id="9913.ENSBTAP00000045919"/>
<dbReference type="PaxDb" id="9913-ENSBTAP00000045919"/>
<dbReference type="Ensembl" id="ENSBTAT00000111881.1">
    <property type="protein sequence ID" value="ENSBTAP00000090031.1"/>
    <property type="gene ID" value="ENSBTAG00000037393.3"/>
</dbReference>
<dbReference type="GeneID" id="523536"/>
<dbReference type="KEGG" id="bta:523536"/>
<dbReference type="CTD" id="51193"/>
<dbReference type="VEuPathDB" id="HostDB:ENSBTAG00000037393"/>
<dbReference type="VGNC" id="VGNC:52853">
    <property type="gene designation" value="ZNF639"/>
</dbReference>
<dbReference type="eggNOG" id="KOG1721">
    <property type="taxonomic scope" value="Eukaryota"/>
</dbReference>
<dbReference type="GeneTree" id="ENSGT00940000156335"/>
<dbReference type="HOGENOM" id="CLU_569800_0_0_1"/>
<dbReference type="InParanoid" id="A5PK30"/>
<dbReference type="OMA" id="PDINRGR"/>
<dbReference type="OrthoDB" id="6077919at2759"/>
<dbReference type="TreeFam" id="TF335557"/>
<dbReference type="Proteomes" id="UP000009136">
    <property type="component" value="Chromosome 1"/>
</dbReference>
<dbReference type="Bgee" id="ENSBTAG00000037393">
    <property type="expression patterns" value="Expressed in oocyte and 107 other cell types or tissues"/>
</dbReference>
<dbReference type="GO" id="GO:0005654">
    <property type="term" value="C:nucleoplasm"/>
    <property type="evidence" value="ECO:0007669"/>
    <property type="project" value="Ensembl"/>
</dbReference>
<dbReference type="GO" id="GO:0005634">
    <property type="term" value="C:nucleus"/>
    <property type="evidence" value="ECO:0000250"/>
    <property type="project" value="UniProtKB"/>
</dbReference>
<dbReference type="GO" id="GO:0001228">
    <property type="term" value="F:DNA-binding transcription activator activity, RNA polymerase II-specific"/>
    <property type="evidence" value="ECO:0007669"/>
    <property type="project" value="Ensembl"/>
</dbReference>
<dbReference type="GO" id="GO:0003700">
    <property type="term" value="F:DNA-binding transcription factor activity"/>
    <property type="evidence" value="ECO:0000250"/>
    <property type="project" value="UniProtKB"/>
</dbReference>
<dbReference type="GO" id="GO:0000978">
    <property type="term" value="F:RNA polymerase II cis-regulatory region sequence-specific DNA binding"/>
    <property type="evidence" value="ECO:0000318"/>
    <property type="project" value="GO_Central"/>
</dbReference>
<dbReference type="GO" id="GO:0000976">
    <property type="term" value="F:transcription cis-regulatory region binding"/>
    <property type="evidence" value="ECO:0000250"/>
    <property type="project" value="UniProtKB"/>
</dbReference>
<dbReference type="GO" id="GO:0008270">
    <property type="term" value="F:zinc ion binding"/>
    <property type="evidence" value="ECO:0007669"/>
    <property type="project" value="UniProtKB-KW"/>
</dbReference>
<dbReference type="GO" id="GO:0043922">
    <property type="term" value="P:negative regulation by host of viral transcription"/>
    <property type="evidence" value="ECO:0000250"/>
    <property type="project" value="UniProtKB"/>
</dbReference>
<dbReference type="GO" id="GO:0045892">
    <property type="term" value="P:negative regulation of DNA-templated transcription"/>
    <property type="evidence" value="ECO:0000250"/>
    <property type="project" value="UniProtKB"/>
</dbReference>
<dbReference type="GO" id="GO:0043923">
    <property type="term" value="P:positive regulation by host of viral transcription"/>
    <property type="evidence" value="ECO:0000250"/>
    <property type="project" value="UniProtKB"/>
</dbReference>
<dbReference type="GO" id="GO:0030307">
    <property type="term" value="P:positive regulation of cell growth"/>
    <property type="evidence" value="ECO:0000250"/>
    <property type="project" value="UniProtKB"/>
</dbReference>
<dbReference type="GO" id="GO:0006357">
    <property type="term" value="P:regulation of transcription by RNA polymerase II"/>
    <property type="evidence" value="ECO:0000318"/>
    <property type="project" value="GO_Central"/>
</dbReference>
<dbReference type="GO" id="GO:0046718">
    <property type="term" value="P:symbiont entry into host cell"/>
    <property type="evidence" value="ECO:0000250"/>
    <property type="project" value="UniProtKB"/>
</dbReference>
<dbReference type="FunFam" id="3.30.160.60:FF:000776">
    <property type="entry name" value="Zinc finger protein 639"/>
    <property type="match status" value="1"/>
</dbReference>
<dbReference type="FunFam" id="3.30.160.60:FF:001103">
    <property type="entry name" value="Zinc finger protein 639"/>
    <property type="match status" value="1"/>
</dbReference>
<dbReference type="FunFam" id="3.30.160.60:FF:001200">
    <property type="entry name" value="zinc finger protein 639"/>
    <property type="match status" value="1"/>
</dbReference>
<dbReference type="FunFam" id="3.30.160.60:FF:001222">
    <property type="entry name" value="zinc finger protein 639"/>
    <property type="match status" value="1"/>
</dbReference>
<dbReference type="Gene3D" id="3.30.160.60">
    <property type="entry name" value="Classic Zinc Finger"/>
    <property type="match status" value="4"/>
</dbReference>
<dbReference type="InterPro" id="IPR036236">
    <property type="entry name" value="Znf_C2H2_sf"/>
</dbReference>
<dbReference type="InterPro" id="IPR013087">
    <property type="entry name" value="Znf_C2H2_type"/>
</dbReference>
<dbReference type="PANTHER" id="PTHR24379:SF121">
    <property type="entry name" value="C2H2-TYPE DOMAIN-CONTAINING PROTEIN"/>
    <property type="match status" value="1"/>
</dbReference>
<dbReference type="PANTHER" id="PTHR24379">
    <property type="entry name" value="KRAB AND ZINC FINGER DOMAIN-CONTAINING"/>
    <property type="match status" value="1"/>
</dbReference>
<dbReference type="Pfam" id="PF00096">
    <property type="entry name" value="zf-C2H2"/>
    <property type="match status" value="1"/>
</dbReference>
<dbReference type="SMART" id="SM00355">
    <property type="entry name" value="ZnF_C2H2"/>
    <property type="match status" value="9"/>
</dbReference>
<dbReference type="SUPFAM" id="SSF57667">
    <property type="entry name" value="beta-beta-alpha zinc fingers"/>
    <property type="match status" value="4"/>
</dbReference>
<dbReference type="PROSITE" id="PS00028">
    <property type="entry name" value="ZINC_FINGER_C2H2_1"/>
    <property type="match status" value="4"/>
</dbReference>
<dbReference type="PROSITE" id="PS50157">
    <property type="entry name" value="ZINC_FINGER_C2H2_2"/>
    <property type="match status" value="5"/>
</dbReference>
<gene>
    <name type="primary">ZNF639</name>
</gene>